<protein>
    <recommendedName>
        <fullName evidence="1">UPF0178 protein AZOSEA36080</fullName>
    </recommendedName>
</protein>
<sequence>MQIWVDADACPKVIKEILYRAAERTGVLLTLVANQPLFPPRSLWIKTLQVPPGFDVADNEIVRRLATGDLVVTADIPLAAEVIACGGHALNPRGEFYSTENIRELLNLRDFMDTLRSSGVQTGGPAALTQADRQVFANRLDQFLARIVSD</sequence>
<proteinExistence type="inferred from homology"/>
<dbReference type="EMBL" id="CR555306">
    <property type="protein sequence ID" value="CAI09733.1"/>
    <property type="molecule type" value="Genomic_DNA"/>
</dbReference>
<dbReference type="RefSeq" id="WP_011239391.1">
    <property type="nucleotide sequence ID" value="NC_006513.1"/>
</dbReference>
<dbReference type="STRING" id="76114.ebA6313"/>
<dbReference type="KEGG" id="eba:ebA6313"/>
<dbReference type="eggNOG" id="COG1671">
    <property type="taxonomic scope" value="Bacteria"/>
</dbReference>
<dbReference type="HOGENOM" id="CLU_106619_2_1_4"/>
<dbReference type="OrthoDB" id="9798918at2"/>
<dbReference type="Proteomes" id="UP000006552">
    <property type="component" value="Chromosome"/>
</dbReference>
<dbReference type="CDD" id="cd18720">
    <property type="entry name" value="PIN_YqxD-like"/>
    <property type="match status" value="1"/>
</dbReference>
<dbReference type="HAMAP" id="MF_00489">
    <property type="entry name" value="UPF0178"/>
    <property type="match status" value="1"/>
</dbReference>
<dbReference type="InterPro" id="IPR003791">
    <property type="entry name" value="UPF0178"/>
</dbReference>
<dbReference type="NCBIfam" id="NF001095">
    <property type="entry name" value="PRK00124.1"/>
    <property type="match status" value="1"/>
</dbReference>
<dbReference type="PANTHER" id="PTHR35146">
    <property type="entry name" value="UPF0178 PROTEIN YAII"/>
    <property type="match status" value="1"/>
</dbReference>
<dbReference type="PANTHER" id="PTHR35146:SF1">
    <property type="entry name" value="UPF0178 PROTEIN YAII"/>
    <property type="match status" value="1"/>
</dbReference>
<dbReference type="Pfam" id="PF02639">
    <property type="entry name" value="DUF188"/>
    <property type="match status" value="1"/>
</dbReference>
<gene>
    <name type="ordered locus">AZOSEA36080</name>
    <name type="ORF">ebA6313</name>
</gene>
<keyword id="KW-1185">Reference proteome</keyword>
<organism>
    <name type="scientific">Aromatoleum aromaticum (strain DSM 19018 / LMG 30748 / EbN1)</name>
    <name type="common">Azoarcus sp. (strain EbN1)</name>
    <dbReference type="NCBI Taxonomy" id="76114"/>
    <lineage>
        <taxon>Bacteria</taxon>
        <taxon>Pseudomonadati</taxon>
        <taxon>Pseudomonadota</taxon>
        <taxon>Betaproteobacteria</taxon>
        <taxon>Rhodocyclales</taxon>
        <taxon>Rhodocyclaceae</taxon>
        <taxon>Aromatoleum</taxon>
    </lineage>
</organism>
<reference key="1">
    <citation type="journal article" date="2005" name="Arch. Microbiol.">
        <title>The genome sequence of an anaerobic aromatic-degrading denitrifying bacterium, strain EbN1.</title>
        <authorList>
            <person name="Rabus R."/>
            <person name="Kube M."/>
            <person name="Heider J."/>
            <person name="Beck A."/>
            <person name="Heitmann K."/>
            <person name="Widdel F."/>
            <person name="Reinhardt R."/>
        </authorList>
    </citation>
    <scope>NUCLEOTIDE SEQUENCE [LARGE SCALE GENOMIC DNA]</scope>
    <source>
        <strain>DSM 19018 / LMG 30748 / EbN1</strain>
    </source>
</reference>
<name>Y3608_AROAE</name>
<accession>Q5NYY1</accession>
<comment type="similarity">
    <text evidence="1">Belongs to the UPF0178 family.</text>
</comment>
<evidence type="ECO:0000255" key="1">
    <source>
        <dbReference type="HAMAP-Rule" id="MF_00489"/>
    </source>
</evidence>
<feature type="chain" id="PRO_0000175954" description="UPF0178 protein AZOSEA36080">
    <location>
        <begin position="1"/>
        <end position="150"/>
    </location>
</feature>